<feature type="chain" id="PRO_0000382397" description="Glutamate-1-semialdehyde 2,1-aminomutase">
    <location>
        <begin position="1"/>
        <end position="423"/>
    </location>
</feature>
<feature type="modified residue" description="N6-(pyridoxal phosphate)lysine" evidence="1">
    <location>
        <position position="259"/>
    </location>
</feature>
<dbReference type="EC" id="5.4.3.8" evidence="1"/>
<dbReference type="EMBL" id="CP000678">
    <property type="protein sequence ID" value="ABQ87438.1"/>
    <property type="molecule type" value="Genomic_DNA"/>
</dbReference>
<dbReference type="RefSeq" id="WP_011954373.1">
    <property type="nucleotide sequence ID" value="NZ_CP117965.1"/>
</dbReference>
<dbReference type="SMR" id="A5UML0"/>
<dbReference type="STRING" id="420247.Msm_1233"/>
<dbReference type="EnsemblBacteria" id="ABQ87438">
    <property type="protein sequence ID" value="ABQ87438"/>
    <property type="gene ID" value="Msm_1233"/>
</dbReference>
<dbReference type="GeneID" id="78817886"/>
<dbReference type="KEGG" id="msi:Msm_1233"/>
<dbReference type="PATRIC" id="fig|420247.28.peg.1232"/>
<dbReference type="eggNOG" id="arCOG00918">
    <property type="taxonomic scope" value="Archaea"/>
</dbReference>
<dbReference type="HOGENOM" id="CLU_016922_1_5_2"/>
<dbReference type="UniPathway" id="UPA00251">
    <property type="reaction ID" value="UER00317"/>
</dbReference>
<dbReference type="Proteomes" id="UP000001992">
    <property type="component" value="Chromosome"/>
</dbReference>
<dbReference type="GO" id="GO:0005737">
    <property type="term" value="C:cytoplasm"/>
    <property type="evidence" value="ECO:0007669"/>
    <property type="project" value="UniProtKB-SubCell"/>
</dbReference>
<dbReference type="GO" id="GO:0042286">
    <property type="term" value="F:glutamate-1-semialdehyde 2,1-aminomutase activity"/>
    <property type="evidence" value="ECO:0007669"/>
    <property type="project" value="UniProtKB-UniRule"/>
</dbReference>
<dbReference type="GO" id="GO:0030170">
    <property type="term" value="F:pyridoxal phosphate binding"/>
    <property type="evidence" value="ECO:0007669"/>
    <property type="project" value="InterPro"/>
</dbReference>
<dbReference type="GO" id="GO:0008483">
    <property type="term" value="F:transaminase activity"/>
    <property type="evidence" value="ECO:0007669"/>
    <property type="project" value="InterPro"/>
</dbReference>
<dbReference type="GO" id="GO:0006782">
    <property type="term" value="P:protoporphyrinogen IX biosynthetic process"/>
    <property type="evidence" value="ECO:0007669"/>
    <property type="project" value="UniProtKB-UniRule"/>
</dbReference>
<dbReference type="CDD" id="cd00610">
    <property type="entry name" value="OAT_like"/>
    <property type="match status" value="1"/>
</dbReference>
<dbReference type="FunFam" id="3.40.640.10:FF:000021">
    <property type="entry name" value="Glutamate-1-semialdehyde 2,1-aminomutase"/>
    <property type="match status" value="1"/>
</dbReference>
<dbReference type="Gene3D" id="3.90.1150.10">
    <property type="entry name" value="Aspartate Aminotransferase, domain 1"/>
    <property type="match status" value="1"/>
</dbReference>
<dbReference type="Gene3D" id="3.40.640.10">
    <property type="entry name" value="Type I PLP-dependent aspartate aminotransferase-like (Major domain)"/>
    <property type="match status" value="1"/>
</dbReference>
<dbReference type="HAMAP" id="MF_00375">
    <property type="entry name" value="HemL_aminotrans_3"/>
    <property type="match status" value="1"/>
</dbReference>
<dbReference type="InterPro" id="IPR004639">
    <property type="entry name" value="4pyrrol_synth_GluAld_NH2Trfase"/>
</dbReference>
<dbReference type="InterPro" id="IPR005814">
    <property type="entry name" value="Aminotrans_3"/>
</dbReference>
<dbReference type="InterPro" id="IPR049704">
    <property type="entry name" value="Aminotrans_3_PPA_site"/>
</dbReference>
<dbReference type="InterPro" id="IPR015424">
    <property type="entry name" value="PyrdxlP-dep_Trfase"/>
</dbReference>
<dbReference type="InterPro" id="IPR015421">
    <property type="entry name" value="PyrdxlP-dep_Trfase_major"/>
</dbReference>
<dbReference type="InterPro" id="IPR015422">
    <property type="entry name" value="PyrdxlP-dep_Trfase_small"/>
</dbReference>
<dbReference type="NCBIfam" id="TIGR00713">
    <property type="entry name" value="hemL"/>
    <property type="match status" value="1"/>
</dbReference>
<dbReference type="NCBIfam" id="NF000818">
    <property type="entry name" value="PRK00062.1"/>
    <property type="match status" value="1"/>
</dbReference>
<dbReference type="PANTHER" id="PTHR43713">
    <property type="entry name" value="GLUTAMATE-1-SEMIALDEHYDE 2,1-AMINOMUTASE"/>
    <property type="match status" value="1"/>
</dbReference>
<dbReference type="PANTHER" id="PTHR43713:SF3">
    <property type="entry name" value="GLUTAMATE-1-SEMIALDEHYDE 2,1-AMINOMUTASE 1, CHLOROPLASTIC-RELATED"/>
    <property type="match status" value="1"/>
</dbReference>
<dbReference type="Pfam" id="PF00202">
    <property type="entry name" value="Aminotran_3"/>
    <property type="match status" value="1"/>
</dbReference>
<dbReference type="SUPFAM" id="SSF53383">
    <property type="entry name" value="PLP-dependent transferases"/>
    <property type="match status" value="1"/>
</dbReference>
<dbReference type="PROSITE" id="PS00600">
    <property type="entry name" value="AA_TRANSFER_CLASS_3"/>
    <property type="match status" value="1"/>
</dbReference>
<comment type="catalytic activity">
    <reaction evidence="1">
        <text>(S)-4-amino-5-oxopentanoate = 5-aminolevulinate</text>
        <dbReference type="Rhea" id="RHEA:14265"/>
        <dbReference type="ChEBI" id="CHEBI:57501"/>
        <dbReference type="ChEBI" id="CHEBI:356416"/>
        <dbReference type="EC" id="5.4.3.8"/>
    </reaction>
</comment>
<comment type="cofactor">
    <cofactor evidence="1">
        <name>pyridoxal 5'-phosphate</name>
        <dbReference type="ChEBI" id="CHEBI:597326"/>
    </cofactor>
</comment>
<comment type="pathway">
    <text evidence="1">Porphyrin-containing compound metabolism; protoporphyrin-IX biosynthesis; 5-aminolevulinate from L-glutamyl-tRNA(Glu): step 2/2.</text>
</comment>
<comment type="subcellular location">
    <subcellularLocation>
        <location evidence="1">Cytoplasm</location>
    </subcellularLocation>
</comment>
<comment type="similarity">
    <text evidence="1">Belongs to the class-III pyridoxal-phosphate-dependent aminotransferase family. HemL subfamily.</text>
</comment>
<protein>
    <recommendedName>
        <fullName evidence="1">Glutamate-1-semialdehyde 2,1-aminomutase</fullName>
        <shortName evidence="1">GSA</shortName>
        <ecNumber evidence="1">5.4.3.8</ecNumber>
    </recommendedName>
    <alternativeName>
        <fullName evidence="1">Glutamate-1-semialdehyde aminotransferase</fullName>
        <shortName evidence="1">GSA-AT</shortName>
    </alternativeName>
</protein>
<name>GSA_METS3</name>
<proteinExistence type="inferred from homology"/>
<sequence length="423" mass="46375">MFSKDLFQESKKFIPGGVSSPVRAFEPYPFFVKKASGSKIYDVDGNKYIDHCLAYGPLILGHADPKVVREVSNQLTIGSAYGTPTENEIILAKEVVDRIPSAEMVRFVNSGGEATMSAIRLARGFTGKDKIIKFDGAYHGAHDYTLVKGEPGKSCVPDTKGIPLDTAKNTYSVPFNDEEALSDLIQKDGDNIACLIMEVVMGNIGCIEPKKGFLEFVRKITEENNILLIFDEVITGFRLARGGAQEYYGVTPDLTTMGKIVGGGLPMGAFAGKKEIMELIAPNGPVYQAGTFSGNPISVQAGISTLKQLDNQFYKDLERKGNFLRSNIQSIIDEQGYNITPVGCGSMFQIYFNPAPVYNNDDAHNSDAKRFLRYFRALLKEGVFIPPSQFECNFISSAHSMEDLTQTAEAIEVALEVAFKKKG</sequence>
<gene>
    <name evidence="1" type="primary">hemL</name>
    <name type="ordered locus">Msm_1233</name>
</gene>
<evidence type="ECO:0000255" key="1">
    <source>
        <dbReference type="HAMAP-Rule" id="MF_00375"/>
    </source>
</evidence>
<keyword id="KW-0963">Cytoplasm</keyword>
<keyword id="KW-0413">Isomerase</keyword>
<keyword id="KW-0627">Porphyrin biosynthesis</keyword>
<keyword id="KW-0663">Pyridoxal phosphate</keyword>
<accession>A5UML0</accession>
<reference key="1">
    <citation type="journal article" date="2007" name="Proc. Natl. Acad. Sci. U.S.A.">
        <title>Genomic and metabolic adaptations of Methanobrevibacter smithii to the human gut.</title>
        <authorList>
            <person name="Samuel B.S."/>
            <person name="Hansen E.E."/>
            <person name="Manchester J.K."/>
            <person name="Coutinho P.M."/>
            <person name="Henrissat B."/>
            <person name="Fulton R."/>
            <person name="Latreille P."/>
            <person name="Kim K."/>
            <person name="Wilson R.K."/>
            <person name="Gordon J.I."/>
        </authorList>
    </citation>
    <scope>NUCLEOTIDE SEQUENCE [LARGE SCALE GENOMIC DNA]</scope>
    <source>
        <strain>ATCC 35061 / DSM 861 / OCM 144 / PS</strain>
    </source>
</reference>
<organism>
    <name type="scientific">Methanobrevibacter smithii (strain ATCC 35061 / DSM 861 / OCM 144 / PS)</name>
    <dbReference type="NCBI Taxonomy" id="420247"/>
    <lineage>
        <taxon>Archaea</taxon>
        <taxon>Methanobacteriati</taxon>
        <taxon>Methanobacteriota</taxon>
        <taxon>Methanomada group</taxon>
        <taxon>Methanobacteria</taxon>
        <taxon>Methanobacteriales</taxon>
        <taxon>Methanobacteriaceae</taxon>
        <taxon>Methanobrevibacter</taxon>
    </lineage>
</organism>